<reference key="1">
    <citation type="journal article" date="1997" name="Plant Physiol.">
        <title>Differential gene expression in ripening banana fruit.</title>
        <authorList>
            <person name="Clendennen S.K."/>
            <person name="May G.D."/>
        </authorList>
    </citation>
    <scope>NUCLEOTIDE SEQUENCE [MRNA]</scope>
    <source>
        <strain>cv. Grand nain</strain>
        <tissue>Fruit flesh</tissue>
    </source>
</reference>
<organism>
    <name type="scientific">Musa acuminata</name>
    <name type="common">Banana</name>
    <name type="synonym">Musa cavendishii</name>
    <dbReference type="NCBI Taxonomy" id="4641"/>
    <lineage>
        <taxon>Eukaryota</taxon>
        <taxon>Viridiplantae</taxon>
        <taxon>Streptophyta</taxon>
        <taxon>Embryophyta</taxon>
        <taxon>Tracheophyta</taxon>
        <taxon>Spermatophyta</taxon>
        <taxon>Magnoliopsida</taxon>
        <taxon>Liliopsida</taxon>
        <taxon>Zingiberales</taxon>
        <taxon>Musaceae</taxon>
        <taxon>Musa</taxon>
    </lineage>
</organism>
<accession>O22319</accession>
<protein>
    <recommendedName>
        <fullName>Metallothionein-like protein type 2</fullName>
    </recommendedName>
</protein>
<keyword id="KW-0479">Metal-binding</keyword>
<keyword id="KW-0480">Metal-thiolate cluster</keyword>
<name>MT2_MUSAC</name>
<proteinExistence type="inferred from homology"/>
<feature type="chain" id="PRO_0000197404" description="Metallothionein-like protein type 2">
    <location>
        <begin position="1"/>
        <end position="78"/>
    </location>
</feature>
<evidence type="ECO:0000305" key="1"/>
<comment type="function">
    <text>Metallothioneins have a high content of cysteine residues that bind various heavy metals.</text>
</comment>
<comment type="similarity">
    <text evidence="1">Belongs to the metallothionein superfamily. Type 15 family.</text>
</comment>
<comment type="sequence caution" evidence="1">
    <conflict type="erroneous initiation">
        <sequence resource="EMBL-CDS" id="AAB82774"/>
    </conflict>
</comment>
<dbReference type="EMBL" id="AF001525">
    <property type="protein sequence ID" value="AAB82774.1"/>
    <property type="status" value="ALT_INIT"/>
    <property type="molecule type" value="mRNA"/>
</dbReference>
<dbReference type="GO" id="GO:0046872">
    <property type="term" value="F:metal ion binding"/>
    <property type="evidence" value="ECO:0007669"/>
    <property type="project" value="UniProtKB-KW"/>
</dbReference>
<dbReference type="InterPro" id="IPR000347">
    <property type="entry name" value="Metalthion_15p"/>
</dbReference>
<dbReference type="PANTHER" id="PTHR33543">
    <property type="entry name" value="METALLOTHIONEIN-LIKE PROTEIN 2A"/>
    <property type="match status" value="1"/>
</dbReference>
<dbReference type="PANTHER" id="PTHR33543:SF33">
    <property type="entry name" value="METALLOTHIONEIN-LIKE PROTEIN 2B"/>
    <property type="match status" value="1"/>
</dbReference>
<dbReference type="Pfam" id="PF01439">
    <property type="entry name" value="Metallothio_2"/>
    <property type="match status" value="1"/>
</dbReference>
<sequence length="78" mass="7790">MSCSGGNCGCGSSCSCGSGCGGCRMLTDLGEERSSTSQTMIMGVAPQKGHFEELETAAGSDNGCKCGSNCTCDPCNCK</sequence>